<sequence>MAGHKIAHATLKGPSVVKELVIGLTLGLAAGGLWKMHHWNEQRKTRVFYDLLERGEIGVVVTEE</sequence>
<name>CX5C3_ARATH</name>
<evidence type="ECO:0000250" key="1"/>
<evidence type="ECO:0000255" key="2"/>
<evidence type="ECO:0000305" key="3"/>
<comment type="function">
    <text evidence="1">This protein is one of the nuclear-coded polypeptide chains of cytochrome c oxidase, the terminal oxidase in mitochondrial electron transport.</text>
</comment>
<comment type="subcellular location">
    <subcellularLocation>
        <location evidence="1">Mitochondrion inner membrane</location>
    </subcellularLocation>
</comment>
<comment type="similarity">
    <text evidence="3">Belongs to the cytochrome c oxidase subunit 5C family.</text>
</comment>
<accession>Q9FLK2</accession>
<dbReference type="EMBL" id="AB010073">
    <property type="protein sequence ID" value="BAB08486.1"/>
    <property type="molecule type" value="Genomic_DNA"/>
</dbReference>
<dbReference type="EMBL" id="CP002688">
    <property type="protein sequence ID" value="AED97450.1"/>
    <property type="molecule type" value="Genomic_DNA"/>
</dbReference>
<dbReference type="EMBL" id="CP002688">
    <property type="protein sequence ID" value="AED97451.1"/>
    <property type="molecule type" value="Genomic_DNA"/>
</dbReference>
<dbReference type="EMBL" id="CP002688">
    <property type="protein sequence ID" value="AED97452.1"/>
    <property type="molecule type" value="Genomic_DNA"/>
</dbReference>
<dbReference type="EMBL" id="CP002688">
    <property type="protein sequence ID" value="AED97453.1"/>
    <property type="molecule type" value="Genomic_DNA"/>
</dbReference>
<dbReference type="EMBL" id="CP002688">
    <property type="protein sequence ID" value="ANM69040.1"/>
    <property type="molecule type" value="Genomic_DNA"/>
</dbReference>
<dbReference type="EMBL" id="CP002688">
    <property type="protein sequence ID" value="ANM69041.1"/>
    <property type="molecule type" value="Genomic_DNA"/>
</dbReference>
<dbReference type="EMBL" id="AY088342">
    <property type="protein sequence ID" value="AAM65881.1"/>
    <property type="molecule type" value="mRNA"/>
</dbReference>
<dbReference type="RefSeq" id="NP_001032118.1">
    <property type="nucleotide sequence ID" value="NM_001037041.2"/>
</dbReference>
<dbReference type="RefSeq" id="NP_001119471.1">
    <property type="nucleotide sequence ID" value="NM_001125999.1"/>
</dbReference>
<dbReference type="RefSeq" id="NP_001318855.1">
    <property type="nucleotide sequence ID" value="NM_001345467.1"/>
</dbReference>
<dbReference type="RefSeq" id="NP_001330747.1">
    <property type="nucleotide sequence ID" value="NM_001345468.1"/>
</dbReference>
<dbReference type="RefSeq" id="NP_001330748.1">
    <property type="nucleotide sequence ID" value="NM_001345469.1"/>
</dbReference>
<dbReference type="RefSeq" id="NP_851239.1">
    <property type="nucleotide sequence ID" value="NM_180908.2"/>
</dbReference>
<dbReference type="SMR" id="Q9FLK2"/>
<dbReference type="FunCoup" id="Q9FLK2">
    <property type="interactions" value="154"/>
</dbReference>
<dbReference type="STRING" id="3702.Q9FLK2"/>
<dbReference type="PaxDb" id="3702-AT5G61310.2"/>
<dbReference type="ProteomicsDB" id="220427"/>
<dbReference type="EnsemblPlants" id="AT5G61310.1">
    <property type="protein sequence ID" value="AT5G61310.1"/>
    <property type="gene ID" value="AT5G61310"/>
</dbReference>
<dbReference type="EnsemblPlants" id="AT5G61310.2">
    <property type="protein sequence ID" value="AT5G61310.2"/>
    <property type="gene ID" value="AT5G61310"/>
</dbReference>
<dbReference type="EnsemblPlants" id="AT5G61310.3">
    <property type="protein sequence ID" value="AT5G61310.3"/>
    <property type="gene ID" value="AT5G61310"/>
</dbReference>
<dbReference type="EnsemblPlants" id="AT5G61310.4">
    <property type="protein sequence ID" value="AT5G61310.4"/>
    <property type="gene ID" value="AT5G61310"/>
</dbReference>
<dbReference type="EnsemblPlants" id="AT5G61310.5">
    <property type="protein sequence ID" value="AT5G61310.5"/>
    <property type="gene ID" value="AT5G61310"/>
</dbReference>
<dbReference type="EnsemblPlants" id="AT5G61310.6">
    <property type="protein sequence ID" value="AT5G61310.6"/>
    <property type="gene ID" value="AT5G61310"/>
</dbReference>
<dbReference type="GeneID" id="836252"/>
<dbReference type="Gramene" id="AT5G61310.1">
    <property type="protein sequence ID" value="AT5G61310.1"/>
    <property type="gene ID" value="AT5G61310"/>
</dbReference>
<dbReference type="Gramene" id="AT5G61310.2">
    <property type="protein sequence ID" value="AT5G61310.2"/>
    <property type="gene ID" value="AT5G61310"/>
</dbReference>
<dbReference type="Gramene" id="AT5G61310.3">
    <property type="protein sequence ID" value="AT5G61310.3"/>
    <property type="gene ID" value="AT5G61310"/>
</dbReference>
<dbReference type="Gramene" id="AT5G61310.4">
    <property type="protein sequence ID" value="AT5G61310.4"/>
    <property type="gene ID" value="AT5G61310"/>
</dbReference>
<dbReference type="Gramene" id="AT5G61310.5">
    <property type="protein sequence ID" value="AT5G61310.5"/>
    <property type="gene ID" value="AT5G61310"/>
</dbReference>
<dbReference type="Gramene" id="AT5G61310.6">
    <property type="protein sequence ID" value="AT5G61310.6"/>
    <property type="gene ID" value="AT5G61310"/>
</dbReference>
<dbReference type="KEGG" id="ath:AT5G61310"/>
<dbReference type="Araport" id="AT5G61310"/>
<dbReference type="TAIR" id="AT5G61310"/>
<dbReference type="eggNOG" id="ENOG502S8H1">
    <property type="taxonomic scope" value="Eukaryota"/>
</dbReference>
<dbReference type="HOGENOM" id="CLU_177335_1_0_1"/>
<dbReference type="InParanoid" id="Q9FLK2"/>
<dbReference type="OMA" id="NQMAGHR"/>
<dbReference type="OrthoDB" id="506921at2759"/>
<dbReference type="PhylomeDB" id="Q9FLK2"/>
<dbReference type="PRO" id="PR:Q9FLK2"/>
<dbReference type="Proteomes" id="UP000006548">
    <property type="component" value="Chromosome 5"/>
</dbReference>
<dbReference type="ExpressionAtlas" id="Q9FLK2">
    <property type="expression patterns" value="baseline and differential"/>
</dbReference>
<dbReference type="GO" id="GO:0005743">
    <property type="term" value="C:mitochondrial inner membrane"/>
    <property type="evidence" value="ECO:0007669"/>
    <property type="project" value="UniProtKB-SubCell"/>
</dbReference>
<dbReference type="InterPro" id="IPR008432">
    <property type="entry name" value="COX5C"/>
</dbReference>
<dbReference type="PANTHER" id="PTHR34372">
    <property type="entry name" value="CYTOCHROME C OXIDASE SUBUNIT 5C-2-RELATED"/>
    <property type="match status" value="1"/>
</dbReference>
<dbReference type="PANTHER" id="PTHR34372:SF2">
    <property type="entry name" value="CYTOCHROME C OXIDASE SUBUNIT 5C-2-RELATED"/>
    <property type="match status" value="1"/>
</dbReference>
<dbReference type="PIRSF" id="PIRSF038131">
    <property type="entry name" value="COX5C"/>
    <property type="match status" value="1"/>
</dbReference>
<keyword id="KW-0472">Membrane</keyword>
<keyword id="KW-0496">Mitochondrion</keyword>
<keyword id="KW-0999">Mitochondrion inner membrane</keyword>
<keyword id="KW-1185">Reference proteome</keyword>
<keyword id="KW-0812">Transmembrane</keyword>
<keyword id="KW-1133">Transmembrane helix</keyword>
<protein>
    <recommendedName>
        <fullName>Probable cytochrome c oxidase subunit 5C-3</fullName>
    </recommendedName>
    <alternativeName>
        <fullName>Cytochrome c oxidase polypeptide Vc-3</fullName>
    </alternativeName>
</protein>
<feature type="chain" id="PRO_0000128187" description="Probable cytochrome c oxidase subunit 5C-3">
    <location>
        <begin position="1"/>
        <end position="64"/>
    </location>
</feature>
<feature type="transmembrane region" description="Helical" evidence="2">
    <location>
        <begin position="15"/>
        <end position="34"/>
    </location>
</feature>
<gene>
    <name type="ordered locus">At5g61310</name>
    <name type="ORF">FB13.8</name>
</gene>
<reference key="1">
    <citation type="journal article" date="1998" name="DNA Res.">
        <title>Structural analysis of Arabidopsis thaliana chromosome 5. IV. Sequence features of the regions of 1,456,315 bp covered by nineteen physically assigned P1 and TAC clones.</title>
        <authorList>
            <person name="Sato S."/>
            <person name="Kaneko T."/>
            <person name="Kotani H."/>
            <person name="Nakamura Y."/>
            <person name="Asamizu E."/>
            <person name="Miyajima N."/>
            <person name="Tabata S."/>
        </authorList>
    </citation>
    <scope>NUCLEOTIDE SEQUENCE [LARGE SCALE GENOMIC DNA]</scope>
    <source>
        <strain>cv. Columbia</strain>
    </source>
</reference>
<reference key="2">
    <citation type="journal article" date="2017" name="Plant J.">
        <title>Araport11: a complete reannotation of the Arabidopsis thaliana reference genome.</title>
        <authorList>
            <person name="Cheng C.Y."/>
            <person name="Krishnakumar V."/>
            <person name="Chan A.P."/>
            <person name="Thibaud-Nissen F."/>
            <person name="Schobel S."/>
            <person name="Town C.D."/>
        </authorList>
    </citation>
    <scope>GENOME REANNOTATION</scope>
    <source>
        <strain>cv. Columbia</strain>
    </source>
</reference>
<reference key="3">
    <citation type="submission" date="2002-03" db="EMBL/GenBank/DDBJ databases">
        <title>Full-length cDNA from Arabidopsis thaliana.</title>
        <authorList>
            <person name="Brover V.V."/>
            <person name="Troukhan M.E."/>
            <person name="Alexandrov N.A."/>
            <person name="Lu Y.-P."/>
            <person name="Flavell R.B."/>
            <person name="Feldmann K.A."/>
        </authorList>
    </citation>
    <scope>NUCLEOTIDE SEQUENCE [LARGE SCALE MRNA]</scope>
</reference>
<proteinExistence type="inferred from homology"/>
<organism>
    <name type="scientific">Arabidopsis thaliana</name>
    <name type="common">Mouse-ear cress</name>
    <dbReference type="NCBI Taxonomy" id="3702"/>
    <lineage>
        <taxon>Eukaryota</taxon>
        <taxon>Viridiplantae</taxon>
        <taxon>Streptophyta</taxon>
        <taxon>Embryophyta</taxon>
        <taxon>Tracheophyta</taxon>
        <taxon>Spermatophyta</taxon>
        <taxon>Magnoliopsida</taxon>
        <taxon>eudicotyledons</taxon>
        <taxon>Gunneridae</taxon>
        <taxon>Pentapetalae</taxon>
        <taxon>rosids</taxon>
        <taxon>malvids</taxon>
        <taxon>Brassicales</taxon>
        <taxon>Brassicaceae</taxon>
        <taxon>Camelineae</taxon>
        <taxon>Arabidopsis</taxon>
    </lineage>
</organism>